<feature type="chain" id="PRO_1000149313" description="2-isopropylmalate synthase">
    <location>
        <begin position="1"/>
        <end position="533"/>
    </location>
</feature>
<feature type="domain" description="Pyruvate carboxyltransferase" evidence="1">
    <location>
        <begin position="8"/>
        <end position="269"/>
    </location>
</feature>
<feature type="region of interest" description="Regulatory domain" evidence="1">
    <location>
        <begin position="408"/>
        <end position="533"/>
    </location>
</feature>
<feature type="binding site" evidence="1">
    <location>
        <position position="17"/>
    </location>
    <ligand>
        <name>Mn(2+)</name>
        <dbReference type="ChEBI" id="CHEBI:29035"/>
    </ligand>
</feature>
<feature type="binding site" evidence="1">
    <location>
        <position position="208"/>
    </location>
    <ligand>
        <name>Mn(2+)</name>
        <dbReference type="ChEBI" id="CHEBI:29035"/>
    </ligand>
</feature>
<feature type="binding site" evidence="1">
    <location>
        <position position="210"/>
    </location>
    <ligand>
        <name>Mn(2+)</name>
        <dbReference type="ChEBI" id="CHEBI:29035"/>
    </ligand>
</feature>
<feature type="binding site" evidence="1">
    <location>
        <position position="244"/>
    </location>
    <ligand>
        <name>Mn(2+)</name>
        <dbReference type="ChEBI" id="CHEBI:29035"/>
    </ligand>
</feature>
<dbReference type="EC" id="2.3.3.13" evidence="1"/>
<dbReference type="EMBL" id="CP000951">
    <property type="protein sequence ID" value="ACA99352.1"/>
    <property type="molecule type" value="Genomic_DNA"/>
</dbReference>
<dbReference type="RefSeq" id="WP_012306975.1">
    <property type="nucleotide sequence ID" value="NZ_JAHHPU010000001.1"/>
</dbReference>
<dbReference type="SMR" id="B1XLQ9"/>
<dbReference type="STRING" id="32049.SYNPCC7002_A1356"/>
<dbReference type="KEGG" id="syp:SYNPCC7002_A1356"/>
<dbReference type="eggNOG" id="COG0119">
    <property type="taxonomic scope" value="Bacteria"/>
</dbReference>
<dbReference type="HOGENOM" id="CLU_022158_0_1_3"/>
<dbReference type="UniPathway" id="UPA00048">
    <property type="reaction ID" value="UER00070"/>
</dbReference>
<dbReference type="Proteomes" id="UP000001688">
    <property type="component" value="Chromosome"/>
</dbReference>
<dbReference type="GO" id="GO:0005737">
    <property type="term" value="C:cytoplasm"/>
    <property type="evidence" value="ECO:0007669"/>
    <property type="project" value="UniProtKB-SubCell"/>
</dbReference>
<dbReference type="GO" id="GO:0003852">
    <property type="term" value="F:2-isopropylmalate synthase activity"/>
    <property type="evidence" value="ECO:0007669"/>
    <property type="project" value="UniProtKB-UniRule"/>
</dbReference>
<dbReference type="GO" id="GO:0003985">
    <property type="term" value="F:acetyl-CoA C-acetyltransferase activity"/>
    <property type="evidence" value="ECO:0007669"/>
    <property type="project" value="UniProtKB-UniRule"/>
</dbReference>
<dbReference type="GO" id="GO:0030145">
    <property type="term" value="F:manganese ion binding"/>
    <property type="evidence" value="ECO:0007669"/>
    <property type="project" value="UniProtKB-UniRule"/>
</dbReference>
<dbReference type="GO" id="GO:0009098">
    <property type="term" value="P:L-leucine biosynthetic process"/>
    <property type="evidence" value="ECO:0007669"/>
    <property type="project" value="UniProtKB-UniRule"/>
</dbReference>
<dbReference type="CDD" id="cd07940">
    <property type="entry name" value="DRE_TIM_IPMS"/>
    <property type="match status" value="1"/>
</dbReference>
<dbReference type="FunFam" id="1.10.238.260:FF:000001">
    <property type="entry name" value="2-isopropylmalate synthase"/>
    <property type="match status" value="1"/>
</dbReference>
<dbReference type="FunFam" id="3.20.20.70:FF:000010">
    <property type="entry name" value="2-isopropylmalate synthase"/>
    <property type="match status" value="1"/>
</dbReference>
<dbReference type="FunFam" id="3.30.160.270:FF:000001">
    <property type="entry name" value="2-isopropylmalate synthase"/>
    <property type="match status" value="1"/>
</dbReference>
<dbReference type="Gene3D" id="1.10.238.260">
    <property type="match status" value="1"/>
</dbReference>
<dbReference type="Gene3D" id="3.30.160.270">
    <property type="match status" value="1"/>
</dbReference>
<dbReference type="Gene3D" id="3.20.20.70">
    <property type="entry name" value="Aldolase class I"/>
    <property type="match status" value="1"/>
</dbReference>
<dbReference type="HAMAP" id="MF_01025">
    <property type="entry name" value="LeuA_type1"/>
    <property type="match status" value="1"/>
</dbReference>
<dbReference type="InterPro" id="IPR050073">
    <property type="entry name" value="2-IPM_HCS-like"/>
</dbReference>
<dbReference type="InterPro" id="IPR013709">
    <property type="entry name" value="2-isopropylmalate_synth_dimer"/>
</dbReference>
<dbReference type="InterPro" id="IPR002034">
    <property type="entry name" value="AIPM/Hcit_synth_CS"/>
</dbReference>
<dbReference type="InterPro" id="IPR013785">
    <property type="entry name" value="Aldolase_TIM"/>
</dbReference>
<dbReference type="InterPro" id="IPR054691">
    <property type="entry name" value="LeuA/HCS_post-cat"/>
</dbReference>
<dbReference type="InterPro" id="IPR036230">
    <property type="entry name" value="LeuA_allosteric_dom_sf"/>
</dbReference>
<dbReference type="InterPro" id="IPR005671">
    <property type="entry name" value="LeuA_bact_synth"/>
</dbReference>
<dbReference type="InterPro" id="IPR000891">
    <property type="entry name" value="PYR_CT"/>
</dbReference>
<dbReference type="NCBIfam" id="TIGR00973">
    <property type="entry name" value="leuA_bact"/>
    <property type="match status" value="1"/>
</dbReference>
<dbReference type="NCBIfam" id="NF002086">
    <property type="entry name" value="PRK00915.1-3"/>
    <property type="match status" value="1"/>
</dbReference>
<dbReference type="PANTHER" id="PTHR10277:SF9">
    <property type="entry name" value="2-ISOPROPYLMALATE SYNTHASE 1, CHLOROPLASTIC-RELATED"/>
    <property type="match status" value="1"/>
</dbReference>
<dbReference type="PANTHER" id="PTHR10277">
    <property type="entry name" value="HOMOCITRATE SYNTHASE-RELATED"/>
    <property type="match status" value="1"/>
</dbReference>
<dbReference type="Pfam" id="PF22617">
    <property type="entry name" value="HCS_D2"/>
    <property type="match status" value="1"/>
</dbReference>
<dbReference type="Pfam" id="PF00682">
    <property type="entry name" value="HMGL-like"/>
    <property type="match status" value="1"/>
</dbReference>
<dbReference type="Pfam" id="PF08502">
    <property type="entry name" value="LeuA_dimer"/>
    <property type="match status" value="1"/>
</dbReference>
<dbReference type="SMART" id="SM00917">
    <property type="entry name" value="LeuA_dimer"/>
    <property type="match status" value="1"/>
</dbReference>
<dbReference type="SUPFAM" id="SSF110921">
    <property type="entry name" value="2-isopropylmalate synthase LeuA, allosteric (dimerisation) domain"/>
    <property type="match status" value="1"/>
</dbReference>
<dbReference type="SUPFAM" id="SSF51569">
    <property type="entry name" value="Aldolase"/>
    <property type="match status" value="1"/>
</dbReference>
<dbReference type="PROSITE" id="PS00815">
    <property type="entry name" value="AIPM_HOMOCIT_SYNTH_1"/>
    <property type="match status" value="1"/>
</dbReference>
<dbReference type="PROSITE" id="PS00816">
    <property type="entry name" value="AIPM_HOMOCIT_SYNTH_2"/>
    <property type="match status" value="1"/>
</dbReference>
<dbReference type="PROSITE" id="PS50991">
    <property type="entry name" value="PYR_CT"/>
    <property type="match status" value="1"/>
</dbReference>
<reference key="1">
    <citation type="submission" date="2008-02" db="EMBL/GenBank/DDBJ databases">
        <title>Complete sequence of Synechococcus sp. PCC 7002.</title>
        <authorList>
            <person name="Li T."/>
            <person name="Zhao J."/>
            <person name="Zhao C."/>
            <person name="Liu Z."/>
            <person name="Zhao F."/>
            <person name="Marquardt J."/>
            <person name="Nomura C.T."/>
            <person name="Persson S."/>
            <person name="Detter J.C."/>
            <person name="Richardson P.M."/>
            <person name="Lanz C."/>
            <person name="Schuster S.C."/>
            <person name="Wang J."/>
            <person name="Li S."/>
            <person name="Huang X."/>
            <person name="Cai T."/>
            <person name="Yu Z."/>
            <person name="Luo J."/>
            <person name="Zhao J."/>
            <person name="Bryant D.A."/>
        </authorList>
    </citation>
    <scope>NUCLEOTIDE SEQUENCE [LARGE SCALE GENOMIC DNA]</scope>
    <source>
        <strain>ATCC 27264 / PCC 7002 / PR-6</strain>
    </source>
</reference>
<gene>
    <name evidence="1" type="primary">leuA</name>
    <name type="ordered locus">SYNPCC7002_A1356</name>
</gene>
<protein>
    <recommendedName>
        <fullName evidence="1">2-isopropylmalate synthase</fullName>
        <ecNumber evidence="1">2.3.3.13</ecNumber>
    </recommendedName>
    <alternativeName>
        <fullName evidence="1">Alpha-IPM synthase</fullName>
    </alternativeName>
    <alternativeName>
        <fullName evidence="1">Alpha-isopropylmalate synthase</fullName>
    </alternativeName>
</protein>
<keyword id="KW-0028">Amino-acid biosynthesis</keyword>
<keyword id="KW-0100">Branched-chain amino acid biosynthesis</keyword>
<keyword id="KW-0963">Cytoplasm</keyword>
<keyword id="KW-0432">Leucine biosynthesis</keyword>
<keyword id="KW-0464">Manganese</keyword>
<keyword id="KW-0479">Metal-binding</keyword>
<keyword id="KW-1185">Reference proteome</keyword>
<keyword id="KW-0808">Transferase</keyword>
<evidence type="ECO:0000255" key="1">
    <source>
        <dbReference type="HAMAP-Rule" id="MF_01025"/>
    </source>
</evidence>
<comment type="function">
    <text evidence="1">Catalyzes the condensation of the acetyl group of acetyl-CoA with 3-methyl-2-oxobutanoate (2-ketoisovalerate) to form 3-carboxy-3-hydroxy-4-methylpentanoate (2-isopropylmalate).</text>
</comment>
<comment type="catalytic activity">
    <reaction evidence="1">
        <text>3-methyl-2-oxobutanoate + acetyl-CoA + H2O = (2S)-2-isopropylmalate + CoA + H(+)</text>
        <dbReference type="Rhea" id="RHEA:21524"/>
        <dbReference type="ChEBI" id="CHEBI:1178"/>
        <dbReference type="ChEBI" id="CHEBI:11851"/>
        <dbReference type="ChEBI" id="CHEBI:15377"/>
        <dbReference type="ChEBI" id="CHEBI:15378"/>
        <dbReference type="ChEBI" id="CHEBI:57287"/>
        <dbReference type="ChEBI" id="CHEBI:57288"/>
        <dbReference type="EC" id="2.3.3.13"/>
    </reaction>
</comment>
<comment type="cofactor">
    <cofactor evidence="1">
        <name>Mn(2+)</name>
        <dbReference type="ChEBI" id="CHEBI:29035"/>
    </cofactor>
</comment>
<comment type="pathway">
    <text evidence="1">Amino-acid biosynthesis; L-leucine biosynthesis; L-leucine from 3-methyl-2-oxobutanoate: step 1/4.</text>
</comment>
<comment type="subunit">
    <text evidence="1">Homodimer.</text>
</comment>
<comment type="subcellular location">
    <subcellularLocation>
        <location evidence="1">Cytoplasm</location>
    </subcellularLocation>
</comment>
<comment type="similarity">
    <text evidence="1">Belongs to the alpha-IPM synthase/homocitrate synthase family. LeuA type 1 subfamily.</text>
</comment>
<accession>B1XLQ9</accession>
<proteinExistence type="inferred from homology"/>
<name>LEU1_PICP2</name>
<organism>
    <name type="scientific">Picosynechococcus sp. (strain ATCC 27264 / PCC 7002 / PR-6)</name>
    <name type="common">Agmenellum quadruplicatum</name>
    <dbReference type="NCBI Taxonomy" id="32049"/>
    <lineage>
        <taxon>Bacteria</taxon>
        <taxon>Bacillati</taxon>
        <taxon>Cyanobacteriota</taxon>
        <taxon>Cyanophyceae</taxon>
        <taxon>Oscillatoriophycideae</taxon>
        <taxon>Chroococcales</taxon>
        <taxon>Geminocystaceae</taxon>
        <taxon>Picosynechococcus</taxon>
    </lineage>
</organism>
<sequence>MNNQDDRIIIFDTTLRDGEQSPGATLNGDEKLAIARALARLGVDVIEAGFPRASRGDFDAVQRIAAEVGTENGPTICGLARATKGDIEAAGNALKPAFSNRIHTFIATSDIHLEYKLRKSRKDVLAIAPEMVAYAKTFTNDVEFSPEDAGRSDPEFLYQILEAVIDAGATTVNIPDTVGYTTPAEFGALIKGIKENVPNIDRAIISVHGHNDLGLAVANFLEAVKNGARQLECTINGIGERAGNAALEELVMALHVRRQYYNPFLGRPADSEAPLTSINTKEIYKTSRLVSNLTGLSVQANKAIVGLNAFAHESGIHQDGVLKNKLTYEIMDAQSIGLTDNQIILGKHSGRNAFRTRLAELGFDLSDNDLNKAFLRFKDLADKKKEITDWDLEAIVKDETQQPPELFRLELVQVSCGDHAQPTATITIRTPGGKELTDAAIGTGPVDAIYKAINRVVQVPNELIEYSVQSVTAGIDAIGEVTIRLRHEGRIYSGHAANTDIVVASARAYISALNRLYAALQEDVSANPAKASL</sequence>